<organism>
    <name type="scientific">Bacillus mycoides (strain KBAB4)</name>
    <name type="common">Bacillus weihenstephanensis</name>
    <dbReference type="NCBI Taxonomy" id="315730"/>
    <lineage>
        <taxon>Bacteria</taxon>
        <taxon>Bacillati</taxon>
        <taxon>Bacillota</taxon>
        <taxon>Bacilli</taxon>
        <taxon>Bacillales</taxon>
        <taxon>Bacillaceae</taxon>
        <taxon>Bacillus</taxon>
        <taxon>Bacillus cereus group</taxon>
    </lineage>
</organism>
<accession>A9VP91</accession>
<evidence type="ECO:0000255" key="1">
    <source>
        <dbReference type="HAMAP-Rule" id="MF_01302"/>
    </source>
</evidence>
<evidence type="ECO:0000305" key="2"/>
<keyword id="KW-0687">Ribonucleoprotein</keyword>
<keyword id="KW-0689">Ribosomal protein</keyword>
<keyword id="KW-0694">RNA-binding</keyword>
<keyword id="KW-0699">rRNA-binding</keyword>
<comment type="function">
    <text evidence="1">One of the primary rRNA binding proteins, it binds directly to 16S rRNA central domain where it helps coordinate assembly of the platform of the 30S subunit.</text>
</comment>
<comment type="subunit">
    <text evidence="1">Part of the 30S ribosomal subunit. Contacts proteins S5 and S12.</text>
</comment>
<comment type="similarity">
    <text evidence="1">Belongs to the universal ribosomal protein uS8 family.</text>
</comment>
<feature type="chain" id="PRO_1000140513" description="Small ribosomal subunit protein uS8">
    <location>
        <begin position="1"/>
        <end position="132"/>
    </location>
</feature>
<gene>
    <name evidence="1" type="primary">rpsH</name>
    <name type="ordered locus">BcerKBAB4_0119</name>
</gene>
<sequence>MVMTDPIADMLTRIRNANMVRHEKLEVPASKIKKEIADLLKREGFIRDVEYIGDNKQGILRIFLKYGANNERVITGLKRISKPGLRVYAKADEVPRVLNGLGIALVSTSKGVMTDKDARQLQTGGEVVAYVW</sequence>
<reference key="1">
    <citation type="journal article" date="2008" name="Chem. Biol. Interact.">
        <title>Extending the Bacillus cereus group genomics to putative food-borne pathogens of different toxicity.</title>
        <authorList>
            <person name="Lapidus A."/>
            <person name="Goltsman E."/>
            <person name="Auger S."/>
            <person name="Galleron N."/>
            <person name="Segurens B."/>
            <person name="Dossat C."/>
            <person name="Land M.L."/>
            <person name="Broussolle V."/>
            <person name="Brillard J."/>
            <person name="Guinebretiere M.-H."/>
            <person name="Sanchis V."/>
            <person name="Nguen-the C."/>
            <person name="Lereclus D."/>
            <person name="Richardson P."/>
            <person name="Wincker P."/>
            <person name="Weissenbach J."/>
            <person name="Ehrlich S.D."/>
            <person name="Sorokin A."/>
        </authorList>
    </citation>
    <scope>NUCLEOTIDE SEQUENCE [LARGE SCALE GENOMIC DNA]</scope>
    <source>
        <strain>KBAB4</strain>
    </source>
</reference>
<protein>
    <recommendedName>
        <fullName evidence="1">Small ribosomal subunit protein uS8</fullName>
    </recommendedName>
    <alternativeName>
        <fullName evidence="2">30S ribosomal protein S8</fullName>
    </alternativeName>
</protein>
<dbReference type="EMBL" id="CP000903">
    <property type="protein sequence ID" value="ABY41388.1"/>
    <property type="molecule type" value="Genomic_DNA"/>
</dbReference>
<dbReference type="RefSeq" id="WP_002091529.1">
    <property type="nucleotide sequence ID" value="NZ_CAKMRX030000129.1"/>
</dbReference>
<dbReference type="SMR" id="A9VP91"/>
<dbReference type="KEGG" id="bwe:BcerKBAB4_0119"/>
<dbReference type="eggNOG" id="COG0096">
    <property type="taxonomic scope" value="Bacteria"/>
</dbReference>
<dbReference type="HOGENOM" id="CLU_098428_0_2_9"/>
<dbReference type="Proteomes" id="UP000002154">
    <property type="component" value="Chromosome"/>
</dbReference>
<dbReference type="GO" id="GO:1990904">
    <property type="term" value="C:ribonucleoprotein complex"/>
    <property type="evidence" value="ECO:0007669"/>
    <property type="project" value="UniProtKB-KW"/>
</dbReference>
<dbReference type="GO" id="GO:0005840">
    <property type="term" value="C:ribosome"/>
    <property type="evidence" value="ECO:0007669"/>
    <property type="project" value="UniProtKB-KW"/>
</dbReference>
<dbReference type="GO" id="GO:0019843">
    <property type="term" value="F:rRNA binding"/>
    <property type="evidence" value="ECO:0007669"/>
    <property type="project" value="UniProtKB-UniRule"/>
</dbReference>
<dbReference type="GO" id="GO:0003735">
    <property type="term" value="F:structural constituent of ribosome"/>
    <property type="evidence" value="ECO:0007669"/>
    <property type="project" value="InterPro"/>
</dbReference>
<dbReference type="GO" id="GO:0006412">
    <property type="term" value="P:translation"/>
    <property type="evidence" value="ECO:0007669"/>
    <property type="project" value="UniProtKB-UniRule"/>
</dbReference>
<dbReference type="FunFam" id="3.30.1370.30:FF:000002">
    <property type="entry name" value="30S ribosomal protein S8"/>
    <property type="match status" value="1"/>
</dbReference>
<dbReference type="FunFam" id="3.30.1490.10:FF:000001">
    <property type="entry name" value="30S ribosomal protein S8"/>
    <property type="match status" value="1"/>
</dbReference>
<dbReference type="Gene3D" id="3.30.1370.30">
    <property type="match status" value="1"/>
</dbReference>
<dbReference type="Gene3D" id="3.30.1490.10">
    <property type="match status" value="1"/>
</dbReference>
<dbReference type="HAMAP" id="MF_01302_B">
    <property type="entry name" value="Ribosomal_uS8_B"/>
    <property type="match status" value="1"/>
</dbReference>
<dbReference type="InterPro" id="IPR000630">
    <property type="entry name" value="Ribosomal_uS8"/>
</dbReference>
<dbReference type="InterPro" id="IPR047863">
    <property type="entry name" value="Ribosomal_uS8_CS"/>
</dbReference>
<dbReference type="InterPro" id="IPR035987">
    <property type="entry name" value="Ribosomal_uS8_sf"/>
</dbReference>
<dbReference type="NCBIfam" id="NF001109">
    <property type="entry name" value="PRK00136.1"/>
    <property type="match status" value="1"/>
</dbReference>
<dbReference type="PANTHER" id="PTHR11758">
    <property type="entry name" value="40S RIBOSOMAL PROTEIN S15A"/>
    <property type="match status" value="1"/>
</dbReference>
<dbReference type="Pfam" id="PF00410">
    <property type="entry name" value="Ribosomal_S8"/>
    <property type="match status" value="1"/>
</dbReference>
<dbReference type="SUPFAM" id="SSF56047">
    <property type="entry name" value="Ribosomal protein S8"/>
    <property type="match status" value="1"/>
</dbReference>
<dbReference type="PROSITE" id="PS00053">
    <property type="entry name" value="RIBOSOMAL_S8"/>
    <property type="match status" value="1"/>
</dbReference>
<name>RS8_BACMK</name>
<proteinExistence type="inferred from homology"/>